<keyword id="KW-0028">Amino-acid biosynthesis</keyword>
<keyword id="KW-0067">ATP-binding</keyword>
<keyword id="KW-0963">Cytoplasm</keyword>
<keyword id="KW-0328">Glycosyltransferase</keyword>
<keyword id="KW-0368">Histidine biosynthesis</keyword>
<keyword id="KW-0547">Nucleotide-binding</keyword>
<keyword id="KW-0808">Transferase</keyword>
<feature type="chain" id="PRO_0000229319" description="ATP phosphoribosyltransferase">
    <location>
        <begin position="1"/>
        <end position="228"/>
    </location>
</feature>
<evidence type="ECO:0000255" key="1">
    <source>
        <dbReference type="HAMAP-Rule" id="MF_01018"/>
    </source>
</evidence>
<organism>
    <name type="scientific">Moorella thermoacetica (strain ATCC 39073 / JCM 9320)</name>
    <dbReference type="NCBI Taxonomy" id="264732"/>
    <lineage>
        <taxon>Bacteria</taxon>
        <taxon>Bacillati</taxon>
        <taxon>Bacillota</taxon>
        <taxon>Clostridia</taxon>
        <taxon>Moorellales</taxon>
        <taxon>Moorellaceae</taxon>
        <taxon>Moorella</taxon>
    </lineage>
</organism>
<accession>Q2RGV7</accession>
<protein>
    <recommendedName>
        <fullName evidence="1">ATP phosphoribosyltransferase</fullName>
        <shortName evidence="1">ATP-PRT</shortName>
        <shortName evidence="1">ATP-PRTase</shortName>
        <ecNumber evidence="1">2.4.2.17</ecNumber>
    </recommendedName>
</protein>
<proteinExistence type="inferred from homology"/>
<reference key="1">
    <citation type="journal article" date="2008" name="Environ. Microbiol.">
        <title>The complete genome sequence of Moorella thermoacetica (f. Clostridium thermoaceticum).</title>
        <authorList>
            <person name="Pierce E."/>
            <person name="Xie G."/>
            <person name="Barabote R.D."/>
            <person name="Saunders E."/>
            <person name="Han C.S."/>
            <person name="Detter J.C."/>
            <person name="Richardson P."/>
            <person name="Brettin T.S."/>
            <person name="Das A."/>
            <person name="Ljungdahl L.G."/>
            <person name="Ragsdale S.W."/>
        </authorList>
    </citation>
    <scope>NUCLEOTIDE SEQUENCE [LARGE SCALE GENOMIC DNA]</scope>
    <source>
        <strain>ATCC 39073 / JCM 9320</strain>
    </source>
</reference>
<name>HIS1_MOOTA</name>
<gene>
    <name evidence="1" type="primary">hisG</name>
    <name type="ordered locus">Moth_2036</name>
</gene>
<sequence>MVTNLLTLALPKGKLGQDALQLLQAAGLPVEGVATEARQLTFTFPAPGIRYLICRPTDVPTYVEYGAADLGIVGKDTLAEAGADVFELVDLGFGYCRFVVAAPRERWEEAGRSLENLLAGSRRVATKFPRVAASFFQERGLPVEIIKLHGNIELAPRAGLADLIVDIVSTGRTLKENDLVEVAPIFSSTARLIANRVSYRINYRRLTSVVEALKRAAGQGGEKIATTN</sequence>
<dbReference type="EC" id="2.4.2.17" evidence="1"/>
<dbReference type="EMBL" id="CP000232">
    <property type="protein sequence ID" value="ABC20332.1"/>
    <property type="molecule type" value="Genomic_DNA"/>
</dbReference>
<dbReference type="RefSeq" id="YP_430875.1">
    <property type="nucleotide sequence ID" value="NC_007644.1"/>
</dbReference>
<dbReference type="SMR" id="Q2RGV7"/>
<dbReference type="STRING" id="264732.Moth_2036"/>
<dbReference type="EnsemblBacteria" id="ABC20332">
    <property type="protein sequence ID" value="ABC20332"/>
    <property type="gene ID" value="Moth_2036"/>
</dbReference>
<dbReference type="KEGG" id="mta:Moth_2036"/>
<dbReference type="PATRIC" id="fig|264732.11.peg.2211"/>
<dbReference type="eggNOG" id="COG0040">
    <property type="taxonomic scope" value="Bacteria"/>
</dbReference>
<dbReference type="HOGENOM" id="CLU_038115_2_0_9"/>
<dbReference type="OrthoDB" id="9801867at2"/>
<dbReference type="UniPathway" id="UPA00031">
    <property type="reaction ID" value="UER00006"/>
</dbReference>
<dbReference type="GO" id="GO:0005737">
    <property type="term" value="C:cytoplasm"/>
    <property type="evidence" value="ECO:0007669"/>
    <property type="project" value="UniProtKB-SubCell"/>
</dbReference>
<dbReference type="GO" id="GO:0005524">
    <property type="term" value="F:ATP binding"/>
    <property type="evidence" value="ECO:0007669"/>
    <property type="project" value="UniProtKB-KW"/>
</dbReference>
<dbReference type="GO" id="GO:0003879">
    <property type="term" value="F:ATP phosphoribosyltransferase activity"/>
    <property type="evidence" value="ECO:0007669"/>
    <property type="project" value="UniProtKB-UniRule"/>
</dbReference>
<dbReference type="GO" id="GO:0000105">
    <property type="term" value="P:L-histidine biosynthetic process"/>
    <property type="evidence" value="ECO:0007669"/>
    <property type="project" value="UniProtKB-UniRule"/>
</dbReference>
<dbReference type="CDD" id="cd13595">
    <property type="entry name" value="PBP2_HisGs"/>
    <property type="match status" value="1"/>
</dbReference>
<dbReference type="FunFam" id="3.40.190.10:FF:000008">
    <property type="entry name" value="ATP phosphoribosyltransferase"/>
    <property type="match status" value="1"/>
</dbReference>
<dbReference type="Gene3D" id="3.40.190.10">
    <property type="entry name" value="Periplasmic binding protein-like II"/>
    <property type="match status" value="2"/>
</dbReference>
<dbReference type="HAMAP" id="MF_01018">
    <property type="entry name" value="HisG_Short"/>
    <property type="match status" value="1"/>
</dbReference>
<dbReference type="InterPro" id="IPR013820">
    <property type="entry name" value="ATP_PRibTrfase_cat"/>
</dbReference>
<dbReference type="InterPro" id="IPR018198">
    <property type="entry name" value="ATP_PRibTrfase_CS"/>
</dbReference>
<dbReference type="InterPro" id="IPR001348">
    <property type="entry name" value="ATP_PRibTrfase_HisG"/>
</dbReference>
<dbReference type="InterPro" id="IPR024893">
    <property type="entry name" value="ATP_PRibTrfase_HisG_short"/>
</dbReference>
<dbReference type="NCBIfam" id="TIGR00070">
    <property type="entry name" value="hisG"/>
    <property type="match status" value="1"/>
</dbReference>
<dbReference type="PANTHER" id="PTHR21403:SF8">
    <property type="entry name" value="ATP PHOSPHORIBOSYLTRANSFERASE"/>
    <property type="match status" value="1"/>
</dbReference>
<dbReference type="PANTHER" id="PTHR21403">
    <property type="entry name" value="ATP PHOSPHORIBOSYLTRANSFERASE ATP-PRTASE"/>
    <property type="match status" value="1"/>
</dbReference>
<dbReference type="Pfam" id="PF01634">
    <property type="entry name" value="HisG"/>
    <property type="match status" value="1"/>
</dbReference>
<dbReference type="SUPFAM" id="SSF53850">
    <property type="entry name" value="Periplasmic binding protein-like II"/>
    <property type="match status" value="1"/>
</dbReference>
<dbReference type="PROSITE" id="PS01316">
    <property type="entry name" value="ATP_P_PHORIBOSYLTR"/>
    <property type="match status" value="1"/>
</dbReference>
<comment type="function">
    <text evidence="1">Catalyzes the condensation of ATP and 5-phosphoribose 1-diphosphate to form N'-(5'-phosphoribosyl)-ATP (PR-ATP). Has a crucial role in the pathway because the rate of histidine biosynthesis seems to be controlled primarily by regulation of HisG enzymatic activity.</text>
</comment>
<comment type="catalytic activity">
    <reaction evidence="1">
        <text>1-(5-phospho-beta-D-ribosyl)-ATP + diphosphate = 5-phospho-alpha-D-ribose 1-diphosphate + ATP</text>
        <dbReference type="Rhea" id="RHEA:18473"/>
        <dbReference type="ChEBI" id="CHEBI:30616"/>
        <dbReference type="ChEBI" id="CHEBI:33019"/>
        <dbReference type="ChEBI" id="CHEBI:58017"/>
        <dbReference type="ChEBI" id="CHEBI:73183"/>
        <dbReference type="EC" id="2.4.2.17"/>
    </reaction>
</comment>
<comment type="pathway">
    <text evidence="1">Amino-acid biosynthesis; L-histidine biosynthesis; L-histidine from 5-phospho-alpha-D-ribose 1-diphosphate: step 1/9.</text>
</comment>
<comment type="subunit">
    <text evidence="1">Heteromultimer composed of HisG and HisZ subunits.</text>
</comment>
<comment type="subcellular location">
    <subcellularLocation>
        <location evidence="1">Cytoplasm</location>
    </subcellularLocation>
</comment>
<comment type="domain">
    <text>Lacks the C-terminal regulatory region which is replaced by HisZ.</text>
</comment>
<comment type="similarity">
    <text evidence="1">Belongs to the ATP phosphoribosyltransferase family. Short subfamily.</text>
</comment>